<feature type="chain" id="PRO_1000081766" description="Small ribosomal subunit protein uS19">
    <location>
        <begin position="1"/>
        <end position="95"/>
    </location>
</feature>
<sequence>MPRSTNKGPFVDHHLMKKVDQAQKEGSKRPIKTWSRRSMVVPEMVGLTIAIHNGRQHVPVYISENMVGHKLGEFAITRTFRAHSGDRKAKKEGEK</sequence>
<evidence type="ECO:0000255" key="1">
    <source>
        <dbReference type="HAMAP-Rule" id="MF_00531"/>
    </source>
</evidence>
<evidence type="ECO:0000305" key="2"/>
<keyword id="KW-0687">Ribonucleoprotein</keyword>
<keyword id="KW-0689">Ribosomal protein</keyword>
<keyword id="KW-0694">RNA-binding</keyword>
<keyword id="KW-0699">rRNA-binding</keyword>
<reference key="1">
    <citation type="journal article" date="2009" name="Infect. Immun.">
        <title>Comparative genomics reveal extensive transposon-mediated genomic plasticity and diversity among potential effector proteins within the genus Coxiella.</title>
        <authorList>
            <person name="Beare P.A."/>
            <person name="Unsworth N."/>
            <person name="Andoh M."/>
            <person name="Voth D.E."/>
            <person name="Omsland A."/>
            <person name="Gilk S.D."/>
            <person name="Williams K.P."/>
            <person name="Sobral B.W."/>
            <person name="Kupko J.J. III"/>
            <person name="Porcella S.F."/>
            <person name="Samuel J.E."/>
            <person name="Heinzen R.A."/>
        </authorList>
    </citation>
    <scope>NUCLEOTIDE SEQUENCE [LARGE SCALE GENOMIC DNA]</scope>
    <source>
        <strain>Dugway 5J108-111</strain>
    </source>
</reference>
<name>RS19_COXBN</name>
<accession>A9KD27</accession>
<proteinExistence type="inferred from homology"/>
<dbReference type="EMBL" id="CP000733">
    <property type="protein sequence ID" value="ABS78195.1"/>
    <property type="molecule type" value="Genomic_DNA"/>
</dbReference>
<dbReference type="RefSeq" id="WP_005771538.1">
    <property type="nucleotide sequence ID" value="NC_009727.1"/>
</dbReference>
<dbReference type="SMR" id="A9KD27"/>
<dbReference type="KEGG" id="cbd:CBUD_1850"/>
<dbReference type="HOGENOM" id="CLU_144911_0_1_6"/>
<dbReference type="Proteomes" id="UP000008555">
    <property type="component" value="Chromosome"/>
</dbReference>
<dbReference type="GO" id="GO:0005737">
    <property type="term" value="C:cytoplasm"/>
    <property type="evidence" value="ECO:0007669"/>
    <property type="project" value="UniProtKB-ARBA"/>
</dbReference>
<dbReference type="GO" id="GO:0015935">
    <property type="term" value="C:small ribosomal subunit"/>
    <property type="evidence" value="ECO:0007669"/>
    <property type="project" value="InterPro"/>
</dbReference>
<dbReference type="GO" id="GO:0019843">
    <property type="term" value="F:rRNA binding"/>
    <property type="evidence" value="ECO:0007669"/>
    <property type="project" value="UniProtKB-UniRule"/>
</dbReference>
<dbReference type="GO" id="GO:0003735">
    <property type="term" value="F:structural constituent of ribosome"/>
    <property type="evidence" value="ECO:0007669"/>
    <property type="project" value="InterPro"/>
</dbReference>
<dbReference type="GO" id="GO:0000028">
    <property type="term" value="P:ribosomal small subunit assembly"/>
    <property type="evidence" value="ECO:0007669"/>
    <property type="project" value="TreeGrafter"/>
</dbReference>
<dbReference type="GO" id="GO:0006412">
    <property type="term" value="P:translation"/>
    <property type="evidence" value="ECO:0007669"/>
    <property type="project" value="UniProtKB-UniRule"/>
</dbReference>
<dbReference type="FunFam" id="3.30.860.10:FF:000001">
    <property type="entry name" value="30S ribosomal protein S19"/>
    <property type="match status" value="1"/>
</dbReference>
<dbReference type="Gene3D" id="3.30.860.10">
    <property type="entry name" value="30s Ribosomal Protein S19, Chain A"/>
    <property type="match status" value="1"/>
</dbReference>
<dbReference type="HAMAP" id="MF_00531">
    <property type="entry name" value="Ribosomal_uS19"/>
    <property type="match status" value="1"/>
</dbReference>
<dbReference type="InterPro" id="IPR002222">
    <property type="entry name" value="Ribosomal_uS19"/>
</dbReference>
<dbReference type="InterPro" id="IPR005732">
    <property type="entry name" value="Ribosomal_uS19_bac-type"/>
</dbReference>
<dbReference type="InterPro" id="IPR020934">
    <property type="entry name" value="Ribosomal_uS19_CS"/>
</dbReference>
<dbReference type="InterPro" id="IPR023575">
    <property type="entry name" value="Ribosomal_uS19_SF"/>
</dbReference>
<dbReference type="NCBIfam" id="TIGR01050">
    <property type="entry name" value="rpsS_bact"/>
    <property type="match status" value="1"/>
</dbReference>
<dbReference type="PANTHER" id="PTHR11880">
    <property type="entry name" value="RIBOSOMAL PROTEIN S19P FAMILY MEMBER"/>
    <property type="match status" value="1"/>
</dbReference>
<dbReference type="PANTHER" id="PTHR11880:SF8">
    <property type="entry name" value="SMALL RIBOSOMAL SUBUNIT PROTEIN US19M"/>
    <property type="match status" value="1"/>
</dbReference>
<dbReference type="Pfam" id="PF00203">
    <property type="entry name" value="Ribosomal_S19"/>
    <property type="match status" value="1"/>
</dbReference>
<dbReference type="PIRSF" id="PIRSF002144">
    <property type="entry name" value="Ribosomal_S19"/>
    <property type="match status" value="1"/>
</dbReference>
<dbReference type="PRINTS" id="PR00975">
    <property type="entry name" value="RIBOSOMALS19"/>
</dbReference>
<dbReference type="SUPFAM" id="SSF54570">
    <property type="entry name" value="Ribosomal protein S19"/>
    <property type="match status" value="1"/>
</dbReference>
<dbReference type="PROSITE" id="PS00323">
    <property type="entry name" value="RIBOSOMAL_S19"/>
    <property type="match status" value="1"/>
</dbReference>
<comment type="function">
    <text evidence="1">Protein S19 forms a complex with S13 that binds strongly to the 16S ribosomal RNA.</text>
</comment>
<comment type="similarity">
    <text evidence="1">Belongs to the universal ribosomal protein uS19 family.</text>
</comment>
<protein>
    <recommendedName>
        <fullName evidence="1">Small ribosomal subunit protein uS19</fullName>
    </recommendedName>
    <alternativeName>
        <fullName evidence="2">30S ribosomal protein S19</fullName>
    </alternativeName>
</protein>
<organism>
    <name type="scientific">Coxiella burnetii (strain Dugway 5J108-111)</name>
    <dbReference type="NCBI Taxonomy" id="434922"/>
    <lineage>
        <taxon>Bacteria</taxon>
        <taxon>Pseudomonadati</taxon>
        <taxon>Pseudomonadota</taxon>
        <taxon>Gammaproteobacteria</taxon>
        <taxon>Legionellales</taxon>
        <taxon>Coxiellaceae</taxon>
        <taxon>Coxiella</taxon>
    </lineage>
</organism>
<gene>
    <name evidence="1" type="primary">rpsS</name>
    <name type="ordered locus">CBUD_1850</name>
</gene>